<protein>
    <recommendedName>
        <fullName evidence="1">NAD(P)H-quinone oxidoreductase subunit 2</fullName>
        <ecNumber evidence="1">7.1.1.-</ecNumber>
    </recommendedName>
    <alternativeName>
        <fullName evidence="1">NAD(P)H dehydrogenase subunit 2</fullName>
    </alternativeName>
    <alternativeName>
        <fullName evidence="1">NADH-plastoquinone oxidoreductase subunit 2</fullName>
    </alternativeName>
    <alternativeName>
        <fullName evidence="1">NDH-1, subunit 2</fullName>
    </alternativeName>
</protein>
<organism>
    <name type="scientific">Acaryochloris marina (strain MBIC 11017)</name>
    <dbReference type="NCBI Taxonomy" id="329726"/>
    <lineage>
        <taxon>Bacteria</taxon>
        <taxon>Bacillati</taxon>
        <taxon>Cyanobacteriota</taxon>
        <taxon>Cyanophyceae</taxon>
        <taxon>Acaryochloridales</taxon>
        <taxon>Acaryochloridaceae</taxon>
        <taxon>Acaryochloris</taxon>
    </lineage>
</organism>
<name>NU2C_ACAM1</name>
<reference key="1">
    <citation type="journal article" date="2008" name="Proc. Natl. Acad. Sci. U.S.A.">
        <title>Niche adaptation and genome expansion in the chlorophyll d-producing cyanobacterium Acaryochloris marina.</title>
        <authorList>
            <person name="Swingley W.D."/>
            <person name="Chen M."/>
            <person name="Cheung P.C."/>
            <person name="Conrad A.L."/>
            <person name="Dejesa L.C."/>
            <person name="Hao J."/>
            <person name="Honchak B.M."/>
            <person name="Karbach L.E."/>
            <person name="Kurdoglu A."/>
            <person name="Lahiri S."/>
            <person name="Mastrian S.D."/>
            <person name="Miyashita H."/>
            <person name="Page L."/>
            <person name="Ramakrishna P."/>
            <person name="Satoh S."/>
            <person name="Sattley W.M."/>
            <person name="Shimada Y."/>
            <person name="Taylor H.L."/>
            <person name="Tomo T."/>
            <person name="Tsuchiya T."/>
            <person name="Wang Z.T."/>
            <person name="Raymond J."/>
            <person name="Mimuro M."/>
            <person name="Blankenship R.E."/>
            <person name="Touchman J.W."/>
        </authorList>
    </citation>
    <scope>NUCLEOTIDE SEQUENCE [LARGE SCALE GENOMIC DNA]</scope>
    <source>
        <strain>MBIC 11017</strain>
    </source>
</reference>
<feature type="chain" id="PRO_1000080906" description="NAD(P)H-quinone oxidoreductase subunit 2">
    <location>
        <begin position="1"/>
        <end position="521"/>
    </location>
</feature>
<feature type="transmembrane region" description="Helical" evidence="1">
    <location>
        <begin position="15"/>
        <end position="35"/>
    </location>
</feature>
<feature type="transmembrane region" description="Helical" evidence="1">
    <location>
        <begin position="42"/>
        <end position="62"/>
    </location>
</feature>
<feature type="transmembrane region" description="Helical" evidence="1">
    <location>
        <begin position="79"/>
        <end position="99"/>
    </location>
</feature>
<feature type="transmembrane region" description="Helical" evidence="1">
    <location>
        <begin position="109"/>
        <end position="126"/>
    </location>
</feature>
<feature type="transmembrane region" description="Helical" evidence="1">
    <location>
        <begin position="131"/>
        <end position="153"/>
    </location>
</feature>
<feature type="transmembrane region" description="Helical" evidence="1">
    <location>
        <begin position="167"/>
        <end position="187"/>
    </location>
</feature>
<feature type="transmembrane region" description="Helical" evidence="1">
    <location>
        <begin position="208"/>
        <end position="228"/>
    </location>
</feature>
<feature type="transmembrane region" description="Helical" evidence="1">
    <location>
        <begin position="242"/>
        <end position="262"/>
    </location>
</feature>
<feature type="transmembrane region" description="Helical" evidence="1">
    <location>
        <begin position="276"/>
        <end position="296"/>
    </location>
</feature>
<feature type="transmembrane region" description="Helical" evidence="1">
    <location>
        <begin position="304"/>
        <end position="324"/>
    </location>
</feature>
<feature type="transmembrane region" description="Helical" evidence="1">
    <location>
        <begin position="332"/>
        <end position="352"/>
    </location>
</feature>
<feature type="transmembrane region" description="Helical" evidence="1">
    <location>
        <begin position="376"/>
        <end position="396"/>
    </location>
</feature>
<feature type="transmembrane region" description="Helical" evidence="1">
    <location>
        <begin position="398"/>
        <end position="418"/>
    </location>
</feature>
<feature type="transmembrane region" description="Helical" evidence="1">
    <location>
        <begin position="464"/>
        <end position="484"/>
    </location>
</feature>
<dbReference type="EC" id="7.1.1.-" evidence="1"/>
<dbReference type="EMBL" id="CP000828">
    <property type="protein sequence ID" value="ABW27059.1"/>
    <property type="molecule type" value="Genomic_DNA"/>
</dbReference>
<dbReference type="RefSeq" id="WP_012162551.1">
    <property type="nucleotide sequence ID" value="NC_009925.1"/>
</dbReference>
<dbReference type="SMR" id="B0BYP3"/>
<dbReference type="STRING" id="329726.AM1_2044"/>
<dbReference type="KEGG" id="amr:AM1_2044"/>
<dbReference type="eggNOG" id="COG1007">
    <property type="taxonomic scope" value="Bacteria"/>
</dbReference>
<dbReference type="HOGENOM" id="CLU_007100_1_5_3"/>
<dbReference type="OrthoDB" id="9811718at2"/>
<dbReference type="Proteomes" id="UP000000268">
    <property type="component" value="Chromosome"/>
</dbReference>
<dbReference type="GO" id="GO:0031676">
    <property type="term" value="C:plasma membrane-derived thylakoid membrane"/>
    <property type="evidence" value="ECO:0007669"/>
    <property type="project" value="UniProtKB-SubCell"/>
</dbReference>
<dbReference type="GO" id="GO:0008137">
    <property type="term" value="F:NADH dehydrogenase (ubiquinone) activity"/>
    <property type="evidence" value="ECO:0007669"/>
    <property type="project" value="InterPro"/>
</dbReference>
<dbReference type="GO" id="GO:0048038">
    <property type="term" value="F:quinone binding"/>
    <property type="evidence" value="ECO:0007669"/>
    <property type="project" value="UniProtKB-KW"/>
</dbReference>
<dbReference type="GO" id="GO:0042773">
    <property type="term" value="P:ATP synthesis coupled electron transport"/>
    <property type="evidence" value="ECO:0007669"/>
    <property type="project" value="InterPro"/>
</dbReference>
<dbReference type="GO" id="GO:0019684">
    <property type="term" value="P:photosynthesis, light reaction"/>
    <property type="evidence" value="ECO:0007669"/>
    <property type="project" value="UniProtKB-UniRule"/>
</dbReference>
<dbReference type="HAMAP" id="MF_00445">
    <property type="entry name" value="NDH1_NuoN_1"/>
    <property type="match status" value="1"/>
</dbReference>
<dbReference type="InterPro" id="IPR010096">
    <property type="entry name" value="NADH-Q_OxRdtase_suN/2"/>
</dbReference>
<dbReference type="InterPro" id="IPR001750">
    <property type="entry name" value="ND/Mrp_TM"/>
</dbReference>
<dbReference type="InterPro" id="IPR045693">
    <property type="entry name" value="Ndh2_N"/>
</dbReference>
<dbReference type="NCBIfam" id="TIGR01770">
    <property type="entry name" value="NDH_I_N"/>
    <property type="match status" value="1"/>
</dbReference>
<dbReference type="NCBIfam" id="NF002701">
    <property type="entry name" value="PRK02504.1"/>
    <property type="match status" value="1"/>
</dbReference>
<dbReference type="PANTHER" id="PTHR22773">
    <property type="entry name" value="NADH DEHYDROGENASE"/>
    <property type="match status" value="1"/>
</dbReference>
<dbReference type="Pfam" id="PF19530">
    <property type="entry name" value="Ndh2_N"/>
    <property type="match status" value="1"/>
</dbReference>
<dbReference type="Pfam" id="PF00361">
    <property type="entry name" value="Proton_antipo_M"/>
    <property type="match status" value="1"/>
</dbReference>
<dbReference type="PRINTS" id="PR01434">
    <property type="entry name" value="NADHDHGNASE5"/>
</dbReference>
<evidence type="ECO:0000255" key="1">
    <source>
        <dbReference type="HAMAP-Rule" id="MF_00445"/>
    </source>
</evidence>
<comment type="function">
    <text evidence="1">NDH-1 shuttles electrons from an unknown electron donor, via FMN and iron-sulfur (Fe-S) centers, to quinones in the respiratory and/or the photosynthetic chain. The immediate electron acceptor for the enzyme in this species is believed to be plastoquinone. Couples the redox reaction to proton translocation, and thus conserves the redox energy in a proton gradient. Cyanobacterial NDH-1 also plays a role in inorganic carbon-concentration.</text>
</comment>
<comment type="catalytic activity">
    <reaction evidence="1">
        <text>a plastoquinone + NADH + (n+1) H(+)(in) = a plastoquinol + NAD(+) + n H(+)(out)</text>
        <dbReference type="Rhea" id="RHEA:42608"/>
        <dbReference type="Rhea" id="RHEA-COMP:9561"/>
        <dbReference type="Rhea" id="RHEA-COMP:9562"/>
        <dbReference type="ChEBI" id="CHEBI:15378"/>
        <dbReference type="ChEBI" id="CHEBI:17757"/>
        <dbReference type="ChEBI" id="CHEBI:57540"/>
        <dbReference type="ChEBI" id="CHEBI:57945"/>
        <dbReference type="ChEBI" id="CHEBI:62192"/>
    </reaction>
</comment>
<comment type="catalytic activity">
    <reaction evidence="1">
        <text>a plastoquinone + NADPH + (n+1) H(+)(in) = a plastoquinol + NADP(+) + n H(+)(out)</text>
        <dbReference type="Rhea" id="RHEA:42612"/>
        <dbReference type="Rhea" id="RHEA-COMP:9561"/>
        <dbReference type="Rhea" id="RHEA-COMP:9562"/>
        <dbReference type="ChEBI" id="CHEBI:15378"/>
        <dbReference type="ChEBI" id="CHEBI:17757"/>
        <dbReference type="ChEBI" id="CHEBI:57783"/>
        <dbReference type="ChEBI" id="CHEBI:58349"/>
        <dbReference type="ChEBI" id="CHEBI:62192"/>
    </reaction>
</comment>
<comment type="subunit">
    <text evidence="1">NDH-1 can be composed of about 15 different subunits; different subcomplexes with different compositions have been identified which probably have different functions.</text>
</comment>
<comment type="subcellular location">
    <subcellularLocation>
        <location evidence="1">Cellular thylakoid membrane</location>
        <topology evidence="1">Multi-pass membrane protein</topology>
    </subcellularLocation>
</comment>
<comment type="similarity">
    <text evidence="1">Belongs to the complex I subunit 2 family.</text>
</comment>
<keyword id="KW-0472">Membrane</keyword>
<keyword id="KW-0520">NAD</keyword>
<keyword id="KW-0521">NADP</keyword>
<keyword id="KW-0618">Plastoquinone</keyword>
<keyword id="KW-0874">Quinone</keyword>
<keyword id="KW-1185">Reference proteome</keyword>
<keyword id="KW-0793">Thylakoid</keyword>
<keyword id="KW-1278">Translocase</keyword>
<keyword id="KW-0812">Transmembrane</keyword>
<keyword id="KW-1133">Transmembrane helix</keyword>
<keyword id="KW-0813">Transport</keyword>
<sequence length="521" mass="55941">MDVANLASQLNATTILPEGVLVISLILVLLGDITFGRSSAKWTPYLAIASLAACLYLLYTQWDQANPIGFLGSFNADNLSIVFRAIIALSTLVTILMSVRYIEQSGSSIGEFMTVLLTATVGAMFLCGAEELVMIFISLETLSIASYLMTGYMKRDSRSNEAALKYLLIGAASSAVFLYGLSLLYGLSGGKTHLDDIALALTDTSKSLALVISLVFVIASVSFKIAAVPFHQWTPDVYEGSPTPVVAFLSVGSKAAGFALAIRLLTQAFPNLVEQWQFIFTALAILSMVLGNVVAIAQTSMKRMLAYSSIGQAGFVMIGLVIGTEAGYASMVFYLLIYLFMNLGAFTCVILFSLRTGTDEIGDYAGLYLKDPLLTLALSLCLLSLGGIPPLAGFFGKLYLFWAGWQAGAYGLVLLGLITSVVSIYYYIRVIKMMVVKEPQDMSEVIKNYPSIVWKPLGMRPLQVGLVLTLIATSLAGVLSNPLLTIVNSSVADVPRFKQATIPTSIDVAIQPDTPTIAPEL</sequence>
<gene>
    <name evidence="1" type="primary">ndhB</name>
    <name type="ordered locus">AM1_2044</name>
</gene>
<proteinExistence type="inferred from homology"/>
<accession>B0BYP3</accession>